<evidence type="ECO:0000255" key="1">
    <source>
        <dbReference type="HAMAP-Rule" id="MF_00076"/>
    </source>
</evidence>
<organism>
    <name type="scientific">Saccharolobus islandicus (strain M.16.27)</name>
    <name type="common">Sulfolobus islandicus</name>
    <dbReference type="NCBI Taxonomy" id="427318"/>
    <lineage>
        <taxon>Archaea</taxon>
        <taxon>Thermoproteota</taxon>
        <taxon>Thermoprotei</taxon>
        <taxon>Sulfolobales</taxon>
        <taxon>Sulfolobaceae</taxon>
        <taxon>Saccharolobus</taxon>
    </lineage>
</organism>
<proteinExistence type="inferred from homology"/>
<name>HIS7_SACI3</name>
<comment type="catalytic activity">
    <reaction evidence="1">
        <text>D-erythro-1-(imidazol-4-yl)glycerol 3-phosphate = 3-(imidazol-4-yl)-2-oxopropyl phosphate + H2O</text>
        <dbReference type="Rhea" id="RHEA:11040"/>
        <dbReference type="ChEBI" id="CHEBI:15377"/>
        <dbReference type="ChEBI" id="CHEBI:57766"/>
        <dbReference type="ChEBI" id="CHEBI:58278"/>
        <dbReference type="EC" id="4.2.1.19"/>
    </reaction>
</comment>
<comment type="pathway">
    <text evidence="1">Amino-acid biosynthesis; L-histidine biosynthesis; L-histidine from 5-phospho-alpha-D-ribose 1-diphosphate: step 6/9.</text>
</comment>
<comment type="subcellular location">
    <subcellularLocation>
        <location evidence="1">Cytoplasm</location>
    </subcellularLocation>
</comment>
<comment type="similarity">
    <text evidence="1">Belongs to the imidazoleglycerol-phosphate dehydratase family.</text>
</comment>
<dbReference type="EC" id="4.2.1.19" evidence="1"/>
<dbReference type="EMBL" id="CP001401">
    <property type="protein sequence ID" value="ACP55532.1"/>
    <property type="molecule type" value="Genomic_DNA"/>
</dbReference>
<dbReference type="SMR" id="C3N6A7"/>
<dbReference type="KEGG" id="sim:M1627_1652"/>
<dbReference type="HOGENOM" id="CLU_044308_3_0_2"/>
<dbReference type="UniPathway" id="UPA00031">
    <property type="reaction ID" value="UER00011"/>
</dbReference>
<dbReference type="Proteomes" id="UP000002307">
    <property type="component" value="Chromosome"/>
</dbReference>
<dbReference type="GO" id="GO:0005737">
    <property type="term" value="C:cytoplasm"/>
    <property type="evidence" value="ECO:0007669"/>
    <property type="project" value="UniProtKB-SubCell"/>
</dbReference>
<dbReference type="GO" id="GO:0004424">
    <property type="term" value="F:imidazoleglycerol-phosphate dehydratase activity"/>
    <property type="evidence" value="ECO:0007669"/>
    <property type="project" value="UniProtKB-UniRule"/>
</dbReference>
<dbReference type="GO" id="GO:0000105">
    <property type="term" value="P:L-histidine biosynthetic process"/>
    <property type="evidence" value="ECO:0007669"/>
    <property type="project" value="UniProtKB-UniRule"/>
</dbReference>
<dbReference type="CDD" id="cd07914">
    <property type="entry name" value="IGPD"/>
    <property type="match status" value="1"/>
</dbReference>
<dbReference type="FunFam" id="3.30.230.40:FF:000001">
    <property type="entry name" value="Imidazoleglycerol-phosphate dehydratase HisB"/>
    <property type="match status" value="1"/>
</dbReference>
<dbReference type="FunFam" id="3.30.230.40:FF:000003">
    <property type="entry name" value="Imidazoleglycerol-phosphate dehydratase HisB"/>
    <property type="match status" value="1"/>
</dbReference>
<dbReference type="Gene3D" id="3.30.230.40">
    <property type="entry name" value="Imidazole glycerol phosphate dehydratase, domain 1"/>
    <property type="match status" value="2"/>
</dbReference>
<dbReference type="HAMAP" id="MF_00076">
    <property type="entry name" value="HisB"/>
    <property type="match status" value="1"/>
</dbReference>
<dbReference type="InterPro" id="IPR038494">
    <property type="entry name" value="IGPD_sf"/>
</dbReference>
<dbReference type="InterPro" id="IPR000807">
    <property type="entry name" value="ImidazoleglycerolP_deHydtase"/>
</dbReference>
<dbReference type="InterPro" id="IPR020565">
    <property type="entry name" value="ImidazoleglycerP_deHydtase_CS"/>
</dbReference>
<dbReference type="InterPro" id="IPR020568">
    <property type="entry name" value="Ribosomal_Su5_D2-typ_SF"/>
</dbReference>
<dbReference type="NCBIfam" id="NF002114">
    <property type="entry name" value="PRK00951.2-4"/>
    <property type="match status" value="1"/>
</dbReference>
<dbReference type="NCBIfam" id="NF010121">
    <property type="entry name" value="PRK13598.1"/>
    <property type="match status" value="1"/>
</dbReference>
<dbReference type="PANTHER" id="PTHR23133:SF2">
    <property type="entry name" value="IMIDAZOLEGLYCEROL-PHOSPHATE DEHYDRATASE"/>
    <property type="match status" value="1"/>
</dbReference>
<dbReference type="PANTHER" id="PTHR23133">
    <property type="entry name" value="IMIDAZOLEGLYCEROL-PHOSPHATE DEHYDRATASE HIS7"/>
    <property type="match status" value="1"/>
</dbReference>
<dbReference type="Pfam" id="PF00475">
    <property type="entry name" value="IGPD"/>
    <property type="match status" value="1"/>
</dbReference>
<dbReference type="SUPFAM" id="SSF54211">
    <property type="entry name" value="Ribosomal protein S5 domain 2-like"/>
    <property type="match status" value="2"/>
</dbReference>
<dbReference type="PROSITE" id="PS00954">
    <property type="entry name" value="IGP_DEHYDRATASE_1"/>
    <property type="match status" value="1"/>
</dbReference>
<dbReference type="PROSITE" id="PS00955">
    <property type="entry name" value="IGP_DEHYDRATASE_2"/>
    <property type="match status" value="1"/>
</dbReference>
<feature type="chain" id="PRO_1000202518" description="Imidazoleglycerol-phosphate dehydratase">
    <location>
        <begin position="1"/>
        <end position="193"/>
    </location>
</feature>
<accession>C3N6A7</accession>
<protein>
    <recommendedName>
        <fullName evidence="1">Imidazoleglycerol-phosphate dehydratase</fullName>
        <shortName evidence="1">IGPD</shortName>
        <ecNumber evidence="1">4.2.1.19</ecNumber>
    </recommendedName>
</protein>
<sequence>MARNANVTRETKETKIEVFLDIDRKGEIKVSTPVPFFNHMLITLLTYMNSTATVSATDKLPYDDHHIIEDVAITLGLAIKEALGDKRGIKRFSHQIIPMDEALVLVSLDISNRGMAFVNLNLKRSEIGGLATENIPHFFQSFAYNSGVTLHISQLSGYNTHHIIEASFKALGLALYEATRIVDNEIRSTKGVI</sequence>
<keyword id="KW-0028">Amino-acid biosynthesis</keyword>
<keyword id="KW-0963">Cytoplasm</keyword>
<keyword id="KW-0368">Histidine biosynthesis</keyword>
<keyword id="KW-0456">Lyase</keyword>
<gene>
    <name evidence="1" type="primary">hisB</name>
    <name type="ordered locus">M1627_1652</name>
</gene>
<reference key="1">
    <citation type="journal article" date="2009" name="Proc. Natl. Acad. Sci. U.S.A.">
        <title>Biogeography of the Sulfolobus islandicus pan-genome.</title>
        <authorList>
            <person name="Reno M.L."/>
            <person name="Held N.L."/>
            <person name="Fields C.J."/>
            <person name="Burke P.V."/>
            <person name="Whitaker R.J."/>
        </authorList>
    </citation>
    <scope>NUCLEOTIDE SEQUENCE [LARGE SCALE GENOMIC DNA]</scope>
    <source>
        <strain>M.16.27</strain>
    </source>
</reference>